<accession>Q15WE9</accession>
<organism>
    <name type="scientific">Pseudoalteromonas atlantica (strain T6c / ATCC BAA-1087)</name>
    <dbReference type="NCBI Taxonomy" id="3042615"/>
    <lineage>
        <taxon>Bacteria</taxon>
        <taxon>Pseudomonadati</taxon>
        <taxon>Pseudomonadota</taxon>
        <taxon>Gammaproteobacteria</taxon>
        <taxon>Alteromonadales</taxon>
        <taxon>Alteromonadaceae</taxon>
        <taxon>Paraglaciecola</taxon>
    </lineage>
</organism>
<evidence type="ECO:0000255" key="1">
    <source>
        <dbReference type="HAMAP-Rule" id="MF_00052"/>
    </source>
</evidence>
<evidence type="ECO:0000255" key="2">
    <source>
        <dbReference type="PROSITE-ProRule" id="PRU01319"/>
    </source>
</evidence>
<keyword id="KW-0963">Cytoplasm</keyword>
<keyword id="KW-0255">Endonuclease</keyword>
<keyword id="KW-0378">Hydrolase</keyword>
<keyword id="KW-0464">Manganese</keyword>
<keyword id="KW-0479">Metal-binding</keyword>
<keyword id="KW-0540">Nuclease</keyword>
<reference key="1">
    <citation type="submission" date="2006-06" db="EMBL/GenBank/DDBJ databases">
        <title>Complete sequence of Pseudoalteromonas atlantica T6c.</title>
        <authorList>
            <consortium name="US DOE Joint Genome Institute"/>
            <person name="Copeland A."/>
            <person name="Lucas S."/>
            <person name="Lapidus A."/>
            <person name="Barry K."/>
            <person name="Detter J.C."/>
            <person name="Glavina del Rio T."/>
            <person name="Hammon N."/>
            <person name="Israni S."/>
            <person name="Dalin E."/>
            <person name="Tice H."/>
            <person name="Pitluck S."/>
            <person name="Saunders E."/>
            <person name="Brettin T."/>
            <person name="Bruce D."/>
            <person name="Han C."/>
            <person name="Tapia R."/>
            <person name="Gilna P."/>
            <person name="Schmutz J."/>
            <person name="Larimer F."/>
            <person name="Land M."/>
            <person name="Hauser L."/>
            <person name="Kyrpides N."/>
            <person name="Kim E."/>
            <person name="Karls A.C."/>
            <person name="Bartlett D."/>
            <person name="Higgins B.P."/>
            <person name="Richardson P."/>
        </authorList>
    </citation>
    <scope>NUCLEOTIDE SEQUENCE [LARGE SCALE GENOMIC DNA]</scope>
    <source>
        <strain>T6c / ATCC BAA-1087</strain>
    </source>
</reference>
<feature type="chain" id="PRO_0000334940" description="Ribonuclease HII">
    <location>
        <begin position="1"/>
        <end position="197"/>
    </location>
</feature>
<feature type="domain" description="RNase H type-2" evidence="2">
    <location>
        <begin position="3"/>
        <end position="192"/>
    </location>
</feature>
<feature type="binding site" evidence="1">
    <location>
        <position position="9"/>
    </location>
    <ligand>
        <name>a divalent metal cation</name>
        <dbReference type="ChEBI" id="CHEBI:60240"/>
    </ligand>
</feature>
<feature type="binding site" evidence="1">
    <location>
        <position position="10"/>
    </location>
    <ligand>
        <name>a divalent metal cation</name>
        <dbReference type="ChEBI" id="CHEBI:60240"/>
    </ligand>
</feature>
<feature type="binding site" evidence="1">
    <location>
        <position position="101"/>
    </location>
    <ligand>
        <name>a divalent metal cation</name>
        <dbReference type="ChEBI" id="CHEBI:60240"/>
    </ligand>
</feature>
<protein>
    <recommendedName>
        <fullName evidence="1">Ribonuclease HII</fullName>
        <shortName evidence="1">RNase HII</shortName>
        <ecNumber evidence="1">3.1.26.4</ecNumber>
    </recommendedName>
</protein>
<sequence length="197" mass="21220">MTQLIAGVDEVGRGPLVGDVVTAAVILDPAKPIAGLADSKKISEKKRLALFDIIMQNALAVCVGRASPQEIDELNILHATMLAMKRAVQGLATQPTFVRVDGNRCPNWDYASEAVVKGDSLFAEISAASIIAKVTRDAEMSELHNAHPEYGFAQHKGYPTKAHLEKLAELGPLSQYRMSFKPVQLSLMQRGGQLAGN</sequence>
<gene>
    <name evidence="1" type="primary">rnhB</name>
    <name type="ordered locus">Patl_1263</name>
</gene>
<name>RNH2_PSEA6</name>
<dbReference type="EC" id="3.1.26.4" evidence="1"/>
<dbReference type="EMBL" id="CP000388">
    <property type="protein sequence ID" value="ABG39789.1"/>
    <property type="molecule type" value="Genomic_DNA"/>
</dbReference>
<dbReference type="RefSeq" id="WP_011574114.1">
    <property type="nucleotide sequence ID" value="NC_008228.1"/>
</dbReference>
<dbReference type="SMR" id="Q15WE9"/>
<dbReference type="STRING" id="342610.Patl_1263"/>
<dbReference type="KEGG" id="pat:Patl_1263"/>
<dbReference type="eggNOG" id="COG0164">
    <property type="taxonomic scope" value="Bacteria"/>
</dbReference>
<dbReference type="HOGENOM" id="CLU_036532_3_2_6"/>
<dbReference type="OrthoDB" id="9803420at2"/>
<dbReference type="Proteomes" id="UP000001981">
    <property type="component" value="Chromosome"/>
</dbReference>
<dbReference type="GO" id="GO:0005737">
    <property type="term" value="C:cytoplasm"/>
    <property type="evidence" value="ECO:0007669"/>
    <property type="project" value="UniProtKB-SubCell"/>
</dbReference>
<dbReference type="GO" id="GO:0032299">
    <property type="term" value="C:ribonuclease H2 complex"/>
    <property type="evidence" value="ECO:0007669"/>
    <property type="project" value="TreeGrafter"/>
</dbReference>
<dbReference type="GO" id="GO:0030145">
    <property type="term" value="F:manganese ion binding"/>
    <property type="evidence" value="ECO:0007669"/>
    <property type="project" value="UniProtKB-UniRule"/>
</dbReference>
<dbReference type="GO" id="GO:0003723">
    <property type="term" value="F:RNA binding"/>
    <property type="evidence" value="ECO:0007669"/>
    <property type="project" value="InterPro"/>
</dbReference>
<dbReference type="GO" id="GO:0004523">
    <property type="term" value="F:RNA-DNA hybrid ribonuclease activity"/>
    <property type="evidence" value="ECO:0007669"/>
    <property type="project" value="UniProtKB-UniRule"/>
</dbReference>
<dbReference type="GO" id="GO:0043137">
    <property type="term" value="P:DNA replication, removal of RNA primer"/>
    <property type="evidence" value="ECO:0007669"/>
    <property type="project" value="TreeGrafter"/>
</dbReference>
<dbReference type="GO" id="GO:0006298">
    <property type="term" value="P:mismatch repair"/>
    <property type="evidence" value="ECO:0007669"/>
    <property type="project" value="TreeGrafter"/>
</dbReference>
<dbReference type="CDD" id="cd07182">
    <property type="entry name" value="RNase_HII_bacteria_HII_like"/>
    <property type="match status" value="1"/>
</dbReference>
<dbReference type="FunFam" id="3.30.420.10:FF:000006">
    <property type="entry name" value="Ribonuclease HII"/>
    <property type="match status" value="1"/>
</dbReference>
<dbReference type="Gene3D" id="3.30.420.10">
    <property type="entry name" value="Ribonuclease H-like superfamily/Ribonuclease H"/>
    <property type="match status" value="1"/>
</dbReference>
<dbReference type="HAMAP" id="MF_00052_B">
    <property type="entry name" value="RNase_HII_B"/>
    <property type="match status" value="1"/>
</dbReference>
<dbReference type="InterPro" id="IPR022898">
    <property type="entry name" value="RNase_HII"/>
</dbReference>
<dbReference type="InterPro" id="IPR001352">
    <property type="entry name" value="RNase_HII/HIII"/>
</dbReference>
<dbReference type="InterPro" id="IPR024567">
    <property type="entry name" value="RNase_HII/HIII_dom"/>
</dbReference>
<dbReference type="InterPro" id="IPR012337">
    <property type="entry name" value="RNaseH-like_sf"/>
</dbReference>
<dbReference type="InterPro" id="IPR036397">
    <property type="entry name" value="RNaseH_sf"/>
</dbReference>
<dbReference type="NCBIfam" id="NF000595">
    <property type="entry name" value="PRK00015.1-3"/>
    <property type="match status" value="1"/>
</dbReference>
<dbReference type="NCBIfam" id="NF000596">
    <property type="entry name" value="PRK00015.1-4"/>
    <property type="match status" value="1"/>
</dbReference>
<dbReference type="PANTHER" id="PTHR10954">
    <property type="entry name" value="RIBONUCLEASE H2 SUBUNIT A"/>
    <property type="match status" value="1"/>
</dbReference>
<dbReference type="PANTHER" id="PTHR10954:SF18">
    <property type="entry name" value="RIBONUCLEASE HII"/>
    <property type="match status" value="1"/>
</dbReference>
<dbReference type="Pfam" id="PF01351">
    <property type="entry name" value="RNase_HII"/>
    <property type="match status" value="1"/>
</dbReference>
<dbReference type="SUPFAM" id="SSF53098">
    <property type="entry name" value="Ribonuclease H-like"/>
    <property type="match status" value="1"/>
</dbReference>
<dbReference type="PROSITE" id="PS51975">
    <property type="entry name" value="RNASE_H_2"/>
    <property type="match status" value="1"/>
</dbReference>
<proteinExistence type="inferred from homology"/>
<comment type="function">
    <text evidence="1">Endonuclease that specifically degrades the RNA of RNA-DNA hybrids.</text>
</comment>
<comment type="catalytic activity">
    <reaction evidence="1">
        <text>Endonucleolytic cleavage to 5'-phosphomonoester.</text>
        <dbReference type="EC" id="3.1.26.4"/>
    </reaction>
</comment>
<comment type="cofactor">
    <cofactor evidence="1">
        <name>Mn(2+)</name>
        <dbReference type="ChEBI" id="CHEBI:29035"/>
    </cofactor>
    <cofactor evidence="1">
        <name>Mg(2+)</name>
        <dbReference type="ChEBI" id="CHEBI:18420"/>
    </cofactor>
    <text evidence="1">Manganese or magnesium. Binds 1 divalent metal ion per monomer in the absence of substrate. May bind a second metal ion after substrate binding.</text>
</comment>
<comment type="subcellular location">
    <subcellularLocation>
        <location evidence="1">Cytoplasm</location>
    </subcellularLocation>
</comment>
<comment type="similarity">
    <text evidence="1">Belongs to the RNase HII family.</text>
</comment>